<reference key="1">
    <citation type="journal article" date="2000" name="J. Biol. Chem.">
        <title>PILRalpha, a novel immunoreceptor tyrosine-based inhibitory motif-bearing protein, recruits SHP-1 upon tyrosine phosphorylation and is paired with the truncated counterpart PILRbeta.</title>
        <authorList>
            <person name="Mousseau D.D."/>
            <person name="Banville D."/>
            <person name="L'Abbe D."/>
            <person name="Bouchard P."/>
            <person name="Shen S.H."/>
        </authorList>
    </citation>
    <scope>NUCLEOTIDE SEQUENCE [MRNA] (ISOFORM 1)</scope>
</reference>
<reference key="2">
    <citation type="submission" date="2000-04" db="EMBL/GenBank/DDBJ databases">
        <authorList>
            <person name="Bates E.E."/>
        </authorList>
    </citation>
    <scope>NUCLEOTIDE SEQUENCE [MRNA] (ISOFORM 1)</scope>
</reference>
<reference key="3">
    <citation type="journal article" date="2004" name="Proc. Natl. Acad. Sci. U.S.A.">
        <title>Large-scale cDNA transfection screening for genes related to cancer development and progression.</title>
        <authorList>
            <person name="Wan D."/>
            <person name="Gong Y."/>
            <person name="Qin W."/>
            <person name="Zhang P."/>
            <person name="Li J."/>
            <person name="Wei L."/>
            <person name="Zhou X."/>
            <person name="Li H."/>
            <person name="Qiu X."/>
            <person name="Zhong F."/>
            <person name="He L."/>
            <person name="Yu J."/>
            <person name="Yao G."/>
            <person name="Jiang H."/>
            <person name="Qian L."/>
            <person name="Yu Y."/>
            <person name="Shu H."/>
            <person name="Chen X."/>
            <person name="Xu H."/>
            <person name="Guo M."/>
            <person name="Pan Z."/>
            <person name="Chen Y."/>
            <person name="Ge C."/>
            <person name="Yang S."/>
            <person name="Gu J."/>
        </authorList>
    </citation>
    <scope>NUCLEOTIDE SEQUENCE [LARGE SCALE MRNA] (ISOFORM 3)</scope>
</reference>
<reference key="4">
    <citation type="journal article" date="2007" name="BMC Genomics">
        <title>The full-ORF clone resource of the German cDNA consortium.</title>
        <authorList>
            <person name="Bechtel S."/>
            <person name="Rosenfelder H."/>
            <person name="Duda A."/>
            <person name="Schmidt C.P."/>
            <person name="Ernst U."/>
            <person name="Wellenreuther R."/>
            <person name="Mehrle A."/>
            <person name="Schuster C."/>
            <person name="Bahr A."/>
            <person name="Bloecker H."/>
            <person name="Heubner D."/>
            <person name="Hoerlein A."/>
            <person name="Michel G."/>
            <person name="Wedler H."/>
            <person name="Koehrer K."/>
            <person name="Ottenwaelder B."/>
            <person name="Poustka A."/>
            <person name="Wiemann S."/>
            <person name="Schupp I."/>
        </authorList>
    </citation>
    <scope>NUCLEOTIDE SEQUENCE [LARGE SCALE MRNA] (ISOFORMS 1 AND 2)</scope>
    <source>
        <tissue>Testis</tissue>
    </source>
</reference>
<reference key="5">
    <citation type="journal article" date="2004" name="Genome Res.">
        <title>The status, quality, and expansion of the NIH full-length cDNA project: the Mammalian Gene Collection (MGC).</title>
        <authorList>
            <consortium name="The MGC Project Team"/>
        </authorList>
    </citation>
    <scope>NUCLEOTIDE SEQUENCE [LARGE SCALE MRNA] (ISOFORM 1)</scope>
    <source>
        <tissue>Peripheral blood leukocyte</tissue>
    </source>
</reference>
<sequence length="227" mass="25542">MGRPLLLPLLLLLQPPAFLQPGGSTGSGPSYLYGVTQPKHLSASMGGSVEIPFSFYYPWELAIVPNVRISWRRGHFHGQSFYSTRPPSIHKDYVNRLFLNWTEGQESGFLRISNLRKEDQSVYFCRVELDTRRSGRQQLQSIKGTKLTITQAVTTTTTWRPSSTTTIAGLRVTESKGHSESWHLSLDTAIRVALAVAVLKTVILGLLCLLLLWWRRRKGSRAPSSDF</sequence>
<organism>
    <name type="scientific">Homo sapiens</name>
    <name type="common">Human</name>
    <dbReference type="NCBI Taxonomy" id="9606"/>
    <lineage>
        <taxon>Eukaryota</taxon>
        <taxon>Metazoa</taxon>
        <taxon>Chordata</taxon>
        <taxon>Craniata</taxon>
        <taxon>Vertebrata</taxon>
        <taxon>Euteleostomi</taxon>
        <taxon>Mammalia</taxon>
        <taxon>Eutheria</taxon>
        <taxon>Euarchontoglires</taxon>
        <taxon>Primates</taxon>
        <taxon>Haplorrhini</taxon>
        <taxon>Catarrhini</taxon>
        <taxon>Hominidae</taxon>
        <taxon>Homo</taxon>
    </lineage>
</organism>
<name>PILRB_HUMAN</name>
<gene>
    <name type="primary">PILRB</name>
    <name type="synonym">FDFACT</name>
    <name type="ORF">PP1551</name>
</gene>
<comment type="function">
    <text>Paired receptors consist of highly related activating and inhibitory receptors and are widely involved in the regulation of the immune system. PILRB is thought to act as a cellular signaling activating receptor that associates with ITAM-bearing adapter molecules on the cell surface.</text>
</comment>
<comment type="subcellular location">
    <subcellularLocation>
        <location evidence="4">Membrane</location>
        <topology evidence="4">Single-pass type I membrane protein</topology>
    </subcellularLocation>
</comment>
<comment type="alternative products">
    <event type="alternative splicing"/>
    <isoform>
        <id>Q9UKJ0-1</id>
        <name>1</name>
        <sequence type="displayed"/>
    </isoform>
    <isoform>
        <id>Q9UKJ0-2</id>
        <name>2</name>
        <sequence type="described" ref="VSP_017504"/>
    </isoform>
    <isoform>
        <id>Q9UKJ0-3</id>
        <name>3</name>
        <sequence type="described" ref="VSP_017503 VSP_017504"/>
    </isoform>
</comment>
<keyword id="KW-0002">3D-structure</keyword>
<keyword id="KW-0025">Alternative splicing</keyword>
<keyword id="KW-0325">Glycoprotein</keyword>
<keyword id="KW-0393">Immunoglobulin domain</keyword>
<keyword id="KW-0472">Membrane</keyword>
<keyword id="KW-1267">Proteomics identification</keyword>
<keyword id="KW-0675">Receptor</keyword>
<keyword id="KW-1185">Reference proteome</keyword>
<keyword id="KW-0732">Signal</keyword>
<keyword id="KW-0812">Transmembrane</keyword>
<keyword id="KW-1133">Transmembrane helix</keyword>
<accession>Q9UKJ0</accession>
<accession>Q69YF9</accession>
<accession>Q9HBS0</accession>
<evidence type="ECO:0000255" key="1"/>
<evidence type="ECO:0000303" key="2">
    <source>
    </source>
</evidence>
<evidence type="ECO:0000303" key="3">
    <source>
    </source>
</evidence>
<evidence type="ECO:0000305" key="4"/>
<evidence type="ECO:0007829" key="5">
    <source>
        <dbReference type="PDB" id="4NFD"/>
    </source>
</evidence>
<feature type="signal peptide" evidence="1">
    <location>
        <begin position="1"/>
        <end position="19"/>
    </location>
</feature>
<feature type="chain" id="PRO_0000226822" description="Paired immunoglobulin-like type 2 receptor beta">
    <location>
        <begin position="20"/>
        <end position="227"/>
    </location>
</feature>
<feature type="topological domain" description="Extracellular" evidence="1">
    <location>
        <begin position="20"/>
        <end position="191"/>
    </location>
</feature>
<feature type="transmembrane region" description="Helical" evidence="1">
    <location>
        <begin position="192"/>
        <end position="212"/>
    </location>
</feature>
<feature type="topological domain" description="Cytoplasmic" evidence="1">
    <location>
        <begin position="213"/>
        <end position="227"/>
    </location>
</feature>
<feature type="domain" description="Ig-like V-type">
    <location>
        <begin position="21"/>
        <end position="143"/>
    </location>
</feature>
<feature type="glycosylation site" description="N-linked (GlcNAc...) asparagine" evidence="1">
    <location>
        <position position="100"/>
    </location>
</feature>
<feature type="splice variant" id="VSP_017503" description="In isoform 3." evidence="2">
    <original>M</original>
    <variation>MGRASYGGSPVGHQSSSDHPRAKTCRSPVRDGPRTLCGVPTVALSLHFLREASSGSRTCGRRTSLCTSAKSSWTYRSGRLSWQSIKGTHLTITQALRQPLHRAPLLPGQLCWSPRPLEKNKAM</variation>
    <location>
        <position position="1"/>
    </location>
</feature>
<feature type="splice variant" id="VSP_017504" description="In isoform 2 and isoform 3." evidence="2 3">
    <original>GSTGSGPSYLYGVTQPKHLSASMGGSVEIPFSFYYPWELAIVPNVRISWRRGHFHGQSFYSTRPPSIHKDYVNRLFLNWTEGQESGFLRISNLRKEDQSVYFCRVELDTRRSGRQQLQSIKGTKLTITQAVTTTTTWRPSSTTTIAGLRVTESKGHSESWHLSLDTAIRVALAVAVLKTVILGLLCLLLLWWRRRKGSRAPSSDF</original>
    <variation>LCEPALSELDRGSGERLPQDLKPAEGGPVCVFLPSRAGHPEIREAAVAVHQGDQTHHHPGCHNHHHLEAQQHNHHSRPQGHRKQRALRIMAPKSGHCHQGCIGCRCAQNCHFGTAVPPPPVVEEKER</variation>
    <location>
        <begin position="23"/>
        <end position="227"/>
    </location>
</feature>
<feature type="sequence variant" id="VAR_059406" description="In dbSNP:rs11771799.">
    <original>I</original>
    <variation>T</variation>
    <location>
        <position position="63"/>
    </location>
</feature>
<feature type="sequence variant" id="VAR_059407" description="In dbSNP:rs11761306.">
    <original>N</original>
    <variation>D</variation>
    <location>
        <position position="66"/>
    </location>
</feature>
<feature type="sequence conflict" description="In Ref. 2; CAC19193." evidence="4" ref="2">
    <original>IVPN</original>
    <variation>TAPD</variation>
    <location>
        <begin position="63"/>
        <end position="66"/>
    </location>
</feature>
<feature type="sequence conflict" description="In Ref. 2; CAC19193." evidence="4" ref="2">
    <location>
        <position position="212"/>
    </location>
</feature>
<feature type="strand" evidence="5">
    <location>
        <begin position="33"/>
        <end position="36"/>
    </location>
</feature>
<feature type="strand" evidence="5">
    <location>
        <begin position="39"/>
        <end position="43"/>
    </location>
</feature>
<feature type="strand" evidence="5">
    <location>
        <begin position="49"/>
        <end position="56"/>
    </location>
</feature>
<feature type="strand" evidence="5">
    <location>
        <begin position="68"/>
        <end position="75"/>
    </location>
</feature>
<feature type="strand" evidence="5">
    <location>
        <begin position="79"/>
        <end position="83"/>
    </location>
</feature>
<feature type="turn" evidence="5">
    <location>
        <begin position="84"/>
        <end position="87"/>
    </location>
</feature>
<feature type="helix" evidence="5">
    <location>
        <begin position="91"/>
        <end position="93"/>
    </location>
</feature>
<feature type="strand" evidence="5">
    <location>
        <begin position="96"/>
        <end position="100"/>
    </location>
</feature>
<feature type="strand" evidence="5">
    <location>
        <begin position="106"/>
        <end position="112"/>
    </location>
</feature>
<feature type="helix" evidence="5">
    <location>
        <begin position="117"/>
        <end position="119"/>
    </location>
</feature>
<feature type="strand" evidence="5">
    <location>
        <begin position="121"/>
        <end position="134"/>
    </location>
</feature>
<feature type="strand" evidence="5">
    <location>
        <begin position="136"/>
        <end position="140"/>
    </location>
</feature>
<feature type="strand" evidence="5">
    <location>
        <begin position="145"/>
        <end position="149"/>
    </location>
</feature>
<protein>
    <recommendedName>
        <fullName>Paired immunoglobulin-like type 2 receptor beta</fullName>
    </recommendedName>
    <alternativeName>
        <fullName>Activating receptor PILR-beta</fullName>
    </alternativeName>
    <alternativeName>
        <fullName>Cell surface receptor FDFACT</fullName>
    </alternativeName>
</protein>
<proteinExistence type="evidence at protein level"/>
<dbReference type="EMBL" id="AF161081">
    <property type="protein sequence ID" value="AAD52965.1"/>
    <property type="molecule type" value="mRNA"/>
</dbReference>
<dbReference type="EMBL" id="AJ400845">
    <property type="protein sequence ID" value="CAC19193.1"/>
    <property type="molecule type" value="mRNA"/>
</dbReference>
<dbReference type="EMBL" id="AJ400846">
    <property type="protein sequence ID" value="CAC19194.1"/>
    <property type="molecule type" value="mRNA"/>
</dbReference>
<dbReference type="EMBL" id="AF217981">
    <property type="protein sequence ID" value="AAG17224.1"/>
    <property type="molecule type" value="mRNA"/>
</dbReference>
<dbReference type="EMBL" id="AL834317">
    <property type="protein sequence ID" value="CAH10714.1"/>
    <property type="molecule type" value="mRNA"/>
</dbReference>
<dbReference type="EMBL" id="AL834336">
    <property type="protein sequence ID" value="CAH10711.1"/>
    <property type="molecule type" value="mRNA"/>
</dbReference>
<dbReference type="EMBL" id="BC050547">
    <property type="protein sequence ID" value="AAH50547.1"/>
    <property type="molecule type" value="mRNA"/>
</dbReference>
<dbReference type="CCDS" id="CCDS43622.1">
    <molecule id="Q9UKJ0-1"/>
</dbReference>
<dbReference type="RefSeq" id="NP_839956.1">
    <molecule id="Q9UKJ0-1"/>
    <property type="nucleotide sequence ID" value="NM_178238.4"/>
</dbReference>
<dbReference type="PDB" id="4NFC">
    <property type="method" value="X-ray"/>
    <property type="resolution" value="2.20 A"/>
    <property type="chains" value="A/B=32-150"/>
</dbReference>
<dbReference type="PDB" id="4NFD">
    <property type="method" value="X-ray"/>
    <property type="resolution" value="1.71 A"/>
    <property type="chains" value="A=32-150"/>
</dbReference>
<dbReference type="PDBsum" id="4NFC"/>
<dbReference type="PDBsum" id="4NFD"/>
<dbReference type="SMR" id="Q9UKJ0"/>
<dbReference type="BioGRID" id="119015">
    <property type="interactions" value="45"/>
</dbReference>
<dbReference type="FunCoup" id="Q9UKJ0">
    <property type="interactions" value="299"/>
</dbReference>
<dbReference type="IntAct" id="Q9UKJ0">
    <property type="interactions" value="42"/>
</dbReference>
<dbReference type="STRING" id="9606.ENSP00000391748"/>
<dbReference type="UniLectin" id="Q9UKJ0"/>
<dbReference type="GlyCosmos" id="Q9UKJ0">
    <property type="glycosylation" value="1 site, No reported glycans"/>
</dbReference>
<dbReference type="GlyGen" id="Q9UKJ0">
    <property type="glycosylation" value="1 site"/>
</dbReference>
<dbReference type="iPTMnet" id="Q9UKJ0"/>
<dbReference type="PhosphoSitePlus" id="Q9UKJ0"/>
<dbReference type="BioMuta" id="PILRB"/>
<dbReference type="DMDM" id="74761987"/>
<dbReference type="MassIVE" id="Q9UKJ0"/>
<dbReference type="PaxDb" id="9606-ENSP00000391748"/>
<dbReference type="PeptideAtlas" id="Q9UKJ0"/>
<dbReference type="Antibodypedia" id="30676">
    <property type="antibodies" value="121 antibodies from 29 providers"/>
</dbReference>
<dbReference type="DNASU" id="29990"/>
<dbReference type="Ensembl" id="ENST00000448382.5">
    <molecule id="Q9UKJ0-3"/>
    <property type="protein sequence ID" value="ENSP00000415775.1"/>
    <property type="gene ID" value="ENSG00000121716.21"/>
</dbReference>
<dbReference type="Ensembl" id="ENST00000452089.5">
    <molecule id="Q9UKJ0-1"/>
    <property type="protein sequence ID" value="ENSP00000391748.1"/>
    <property type="gene ID" value="ENSG00000121716.21"/>
</dbReference>
<dbReference type="Ensembl" id="ENST00000609309.3">
    <molecule id="Q9UKJ0-1"/>
    <property type="protein sequence ID" value="ENSP00000477365.1"/>
    <property type="gene ID" value="ENSG00000121716.21"/>
</dbReference>
<dbReference type="GeneID" id="29990"/>
<dbReference type="KEGG" id="hsa:29990"/>
<dbReference type="MANE-Select" id="ENST00000609309.3">
    <property type="protein sequence ID" value="ENSP00000477365.1"/>
    <property type="RefSeq nucleotide sequence ID" value="NM_178238.4"/>
    <property type="RefSeq protein sequence ID" value="NP_839956.1"/>
</dbReference>
<dbReference type="UCSC" id="uc003uun.4">
    <molecule id="Q9UKJ0-1"/>
    <property type="organism name" value="human"/>
</dbReference>
<dbReference type="AGR" id="HGNC:18297"/>
<dbReference type="CTD" id="29990"/>
<dbReference type="DisGeNET" id="29990"/>
<dbReference type="GeneCards" id="PILRB"/>
<dbReference type="HGNC" id="HGNC:18297">
    <property type="gene designation" value="PILRB"/>
</dbReference>
<dbReference type="HPA" id="ENSG00000121716">
    <property type="expression patterns" value="Low tissue specificity"/>
</dbReference>
<dbReference type="MIM" id="605342">
    <property type="type" value="gene"/>
</dbReference>
<dbReference type="neXtProt" id="NX_Q9UKJ0"/>
<dbReference type="OpenTargets" id="ENSG00000121716"/>
<dbReference type="PharmGKB" id="PA134906700"/>
<dbReference type="VEuPathDB" id="HostDB:ENSG00000121716"/>
<dbReference type="eggNOG" id="ENOG502SUHR">
    <property type="taxonomic scope" value="Eukaryota"/>
</dbReference>
<dbReference type="GeneTree" id="ENSGT00940000163799"/>
<dbReference type="HOGENOM" id="CLU_070832_0_0_1"/>
<dbReference type="InParanoid" id="Q9UKJ0"/>
<dbReference type="OMA" id="GKWFWAT"/>
<dbReference type="OrthoDB" id="6152887at2759"/>
<dbReference type="PAN-GO" id="Q9UKJ0">
    <property type="GO annotations" value="1 GO annotation based on evolutionary models"/>
</dbReference>
<dbReference type="PhylomeDB" id="Q9UKJ0"/>
<dbReference type="TreeFam" id="TF338478"/>
<dbReference type="PathwayCommons" id="Q9UKJ0"/>
<dbReference type="Reactome" id="R-HSA-198933">
    <property type="pathway name" value="Immunoregulatory interactions between a Lymphoid and a non-Lymphoid cell"/>
</dbReference>
<dbReference type="SignaLink" id="Q9UKJ0"/>
<dbReference type="BioGRID-ORCS" id="29990">
    <property type="hits" value="16 hits in 1148 CRISPR screens"/>
</dbReference>
<dbReference type="EvolutionaryTrace" id="Q9UKJ0"/>
<dbReference type="GeneWiki" id="PILRB"/>
<dbReference type="GenomeRNAi" id="29990"/>
<dbReference type="Pharos" id="Q9UKJ0">
    <property type="development level" value="Tbio"/>
</dbReference>
<dbReference type="PRO" id="PR:Q9UKJ0"/>
<dbReference type="Proteomes" id="UP000005640">
    <property type="component" value="Chromosome 7"/>
</dbReference>
<dbReference type="RNAct" id="Q9UKJ0">
    <property type="molecule type" value="protein"/>
</dbReference>
<dbReference type="Bgee" id="ENSG00000121716">
    <property type="expression patterns" value="Expressed in right testis and 93 other cell types or tissues"/>
</dbReference>
<dbReference type="ExpressionAtlas" id="Q9UKJ0">
    <property type="expression patterns" value="baseline and differential"/>
</dbReference>
<dbReference type="GO" id="GO:0005886">
    <property type="term" value="C:plasma membrane"/>
    <property type="evidence" value="ECO:0000304"/>
    <property type="project" value="Reactome"/>
</dbReference>
<dbReference type="GO" id="GO:0042288">
    <property type="term" value="F:MHC class I protein binding"/>
    <property type="evidence" value="ECO:0000318"/>
    <property type="project" value="GO_Central"/>
</dbReference>
<dbReference type="GO" id="GO:0007171">
    <property type="term" value="P:activation of transmembrane receptor protein tyrosine kinase activity"/>
    <property type="evidence" value="ECO:0000303"/>
    <property type="project" value="UniProtKB"/>
</dbReference>
<dbReference type="GO" id="GO:0007169">
    <property type="term" value="P:cell surface receptor protein tyrosine kinase signaling pathway"/>
    <property type="evidence" value="ECO:0000304"/>
    <property type="project" value="UniProtKB"/>
</dbReference>
<dbReference type="FunFam" id="2.60.40.10:FF:000753">
    <property type="entry name" value="Paired immunoglobulin-like type 2 receptor alpha"/>
    <property type="match status" value="1"/>
</dbReference>
<dbReference type="Gene3D" id="2.60.40.10">
    <property type="entry name" value="Immunoglobulins"/>
    <property type="match status" value="1"/>
</dbReference>
<dbReference type="InterPro" id="IPR007110">
    <property type="entry name" value="Ig-like_dom"/>
</dbReference>
<dbReference type="InterPro" id="IPR036179">
    <property type="entry name" value="Ig-like_dom_sf"/>
</dbReference>
<dbReference type="InterPro" id="IPR013783">
    <property type="entry name" value="Ig-like_fold"/>
</dbReference>
<dbReference type="InterPro" id="IPR003599">
    <property type="entry name" value="Ig_sub"/>
</dbReference>
<dbReference type="InterPro" id="IPR051694">
    <property type="entry name" value="Immunoregulatory_rcpt-like"/>
</dbReference>
<dbReference type="PANTHER" id="PTHR15549">
    <property type="entry name" value="PAIRED IMMUNOGLOBULIN-LIKE TYPE 2 RECEPTOR"/>
    <property type="match status" value="1"/>
</dbReference>
<dbReference type="PANTHER" id="PTHR15549:SF7">
    <property type="entry name" value="PAIRED IMMUNOGLOBULIN-LIKE TYPE 2 RECEPTOR BETA"/>
    <property type="match status" value="1"/>
</dbReference>
<dbReference type="SMART" id="SM00409">
    <property type="entry name" value="IG"/>
    <property type="match status" value="1"/>
</dbReference>
<dbReference type="SUPFAM" id="SSF48726">
    <property type="entry name" value="Immunoglobulin"/>
    <property type="match status" value="1"/>
</dbReference>
<dbReference type="PROSITE" id="PS50835">
    <property type="entry name" value="IG_LIKE"/>
    <property type="match status" value="1"/>
</dbReference>